<comment type="function">
    <text evidence="1">Catalyzes the transfer of an acyl group from acyl-phosphate (acyl-PO(4)) to glycerol-3-phosphate (G3P) to form lysophosphatidic acid (LPA). This enzyme utilizes acyl-phosphate as fatty acyl donor, but not acyl-CoA or acyl-ACP.</text>
</comment>
<comment type="catalytic activity">
    <reaction evidence="1">
        <text>an acyl phosphate + sn-glycerol 3-phosphate = a 1-acyl-sn-glycero-3-phosphate + phosphate</text>
        <dbReference type="Rhea" id="RHEA:34075"/>
        <dbReference type="ChEBI" id="CHEBI:43474"/>
        <dbReference type="ChEBI" id="CHEBI:57597"/>
        <dbReference type="ChEBI" id="CHEBI:57970"/>
        <dbReference type="ChEBI" id="CHEBI:59918"/>
        <dbReference type="EC" id="2.3.1.275"/>
    </reaction>
</comment>
<comment type="pathway">
    <text evidence="1">Lipid metabolism; phospholipid metabolism.</text>
</comment>
<comment type="subunit">
    <text evidence="1">Probably interacts with PlsX.</text>
</comment>
<comment type="subcellular location">
    <subcellularLocation>
        <location evidence="1">Cell inner membrane</location>
        <topology evidence="1">Multi-pass membrane protein</topology>
    </subcellularLocation>
</comment>
<comment type="similarity">
    <text evidence="1">Belongs to the PlsY family.</text>
</comment>
<accession>Q2W158</accession>
<feature type="chain" id="PRO_0000250310" description="Glycerol-3-phosphate acyltransferase">
    <location>
        <begin position="1"/>
        <end position="201"/>
    </location>
</feature>
<feature type="transmembrane region" description="Helical" evidence="1">
    <location>
        <begin position="4"/>
        <end position="24"/>
    </location>
</feature>
<feature type="transmembrane region" description="Helical" evidence="1">
    <location>
        <begin position="55"/>
        <end position="75"/>
    </location>
</feature>
<feature type="transmembrane region" description="Helical" evidence="1">
    <location>
        <begin position="80"/>
        <end position="100"/>
    </location>
</feature>
<feature type="transmembrane region" description="Helical" evidence="1">
    <location>
        <begin position="110"/>
        <end position="130"/>
    </location>
</feature>
<feature type="transmembrane region" description="Helical" evidence="1">
    <location>
        <begin position="152"/>
        <end position="174"/>
    </location>
</feature>
<reference key="1">
    <citation type="journal article" date="2005" name="DNA Res.">
        <title>Complete genome sequence of the facultative anaerobic magnetotactic bacterium Magnetospirillum sp. strain AMB-1.</title>
        <authorList>
            <person name="Matsunaga T."/>
            <person name="Okamura Y."/>
            <person name="Fukuda Y."/>
            <person name="Wahyudi A.T."/>
            <person name="Murase Y."/>
            <person name="Takeyama H."/>
        </authorList>
    </citation>
    <scope>NUCLEOTIDE SEQUENCE [LARGE SCALE GENOMIC DNA]</scope>
    <source>
        <strain>ATCC 700264 / AMB-1</strain>
    </source>
</reference>
<organism>
    <name type="scientific">Paramagnetospirillum magneticum (strain ATCC 700264 / AMB-1)</name>
    <name type="common">Magnetospirillum magneticum</name>
    <dbReference type="NCBI Taxonomy" id="342108"/>
    <lineage>
        <taxon>Bacteria</taxon>
        <taxon>Pseudomonadati</taxon>
        <taxon>Pseudomonadota</taxon>
        <taxon>Alphaproteobacteria</taxon>
        <taxon>Rhodospirillales</taxon>
        <taxon>Magnetospirillaceae</taxon>
        <taxon>Paramagnetospirillum</taxon>
    </lineage>
</organism>
<dbReference type="EC" id="2.3.1.275" evidence="1"/>
<dbReference type="EMBL" id="AP007255">
    <property type="protein sequence ID" value="BAE52417.1"/>
    <property type="molecule type" value="Genomic_DNA"/>
</dbReference>
<dbReference type="RefSeq" id="WP_011385971.1">
    <property type="nucleotide sequence ID" value="NC_007626.1"/>
</dbReference>
<dbReference type="SMR" id="Q2W158"/>
<dbReference type="STRING" id="342108.amb3613"/>
<dbReference type="KEGG" id="mag:amb3613"/>
<dbReference type="HOGENOM" id="CLU_081254_1_0_5"/>
<dbReference type="OrthoDB" id="9777124at2"/>
<dbReference type="UniPathway" id="UPA00085"/>
<dbReference type="Proteomes" id="UP000007058">
    <property type="component" value="Chromosome"/>
</dbReference>
<dbReference type="GO" id="GO:0005886">
    <property type="term" value="C:plasma membrane"/>
    <property type="evidence" value="ECO:0007669"/>
    <property type="project" value="UniProtKB-SubCell"/>
</dbReference>
<dbReference type="GO" id="GO:0043772">
    <property type="term" value="F:acyl-phosphate glycerol-3-phosphate acyltransferase activity"/>
    <property type="evidence" value="ECO:0007669"/>
    <property type="project" value="UniProtKB-UniRule"/>
</dbReference>
<dbReference type="GO" id="GO:0008654">
    <property type="term" value="P:phospholipid biosynthetic process"/>
    <property type="evidence" value="ECO:0007669"/>
    <property type="project" value="UniProtKB-UniRule"/>
</dbReference>
<dbReference type="HAMAP" id="MF_01043">
    <property type="entry name" value="PlsY"/>
    <property type="match status" value="1"/>
</dbReference>
<dbReference type="InterPro" id="IPR003811">
    <property type="entry name" value="G3P_acylTferase_PlsY"/>
</dbReference>
<dbReference type="NCBIfam" id="TIGR00023">
    <property type="entry name" value="glycerol-3-phosphate 1-O-acyltransferase PlsY"/>
    <property type="match status" value="1"/>
</dbReference>
<dbReference type="PANTHER" id="PTHR30309:SF0">
    <property type="entry name" value="GLYCEROL-3-PHOSPHATE ACYLTRANSFERASE-RELATED"/>
    <property type="match status" value="1"/>
</dbReference>
<dbReference type="PANTHER" id="PTHR30309">
    <property type="entry name" value="INNER MEMBRANE PROTEIN YGIH"/>
    <property type="match status" value="1"/>
</dbReference>
<dbReference type="Pfam" id="PF02660">
    <property type="entry name" value="G3P_acyltransf"/>
    <property type="match status" value="1"/>
</dbReference>
<dbReference type="SMART" id="SM01207">
    <property type="entry name" value="G3P_acyltransf"/>
    <property type="match status" value="1"/>
</dbReference>
<protein>
    <recommendedName>
        <fullName evidence="1">Glycerol-3-phosphate acyltransferase</fullName>
    </recommendedName>
    <alternativeName>
        <fullName evidence="1">Acyl-PO4 G3P acyltransferase</fullName>
    </alternativeName>
    <alternativeName>
        <fullName evidence="1">Acyl-phosphate--glycerol-3-phosphate acyltransferase</fullName>
    </alternativeName>
    <alternativeName>
        <fullName evidence="1">G3P acyltransferase</fullName>
        <shortName evidence="1">GPAT</shortName>
        <ecNumber evidence="1">2.3.1.275</ecNumber>
    </alternativeName>
    <alternativeName>
        <fullName evidence="1">Lysophosphatidic acid synthase</fullName>
        <shortName evidence="1">LPA synthase</shortName>
    </alternativeName>
</protein>
<proteinExistence type="inferred from homology"/>
<gene>
    <name evidence="1" type="primary">plsY</name>
    <name type="ordered locus">amb3613</name>
</gene>
<evidence type="ECO:0000255" key="1">
    <source>
        <dbReference type="HAMAP-Rule" id="MF_01043"/>
    </source>
</evidence>
<keyword id="KW-0997">Cell inner membrane</keyword>
<keyword id="KW-1003">Cell membrane</keyword>
<keyword id="KW-0444">Lipid biosynthesis</keyword>
<keyword id="KW-0443">Lipid metabolism</keyword>
<keyword id="KW-0472">Membrane</keyword>
<keyword id="KW-0594">Phospholipid biosynthesis</keyword>
<keyword id="KW-1208">Phospholipid metabolism</keyword>
<keyword id="KW-0808">Transferase</keyword>
<keyword id="KW-0812">Transmembrane</keyword>
<keyword id="KW-1133">Transmembrane helix</keyword>
<sequence>MLELVAATLGGYLLGSVPFGLVLTRLAGLGDIRQIGSGNIGATNVLRTGRKGLALATLLLDGGKGAIAVGLVWVLLGREMVPVAGFAAVLGHNFPVWLGFKGGKGVATTIGTLLAAAWPVGLACIGTWLVSAAIFRISSLSALIALAASPGFALYFAGPQYALMAAGLAVMGFYRHKANIIRLIRGEEPRIGGKKKTESEG</sequence>
<name>PLSY_PARM1</name>